<keyword id="KW-0963">Cytoplasm</keyword>
<keyword id="KW-0418">Kinase</keyword>
<keyword id="KW-0597">Phosphoprotein</keyword>
<keyword id="KW-0598">Phosphotransferase system</keyword>
<keyword id="KW-0762">Sugar transport</keyword>
<keyword id="KW-0808">Transferase</keyword>
<keyword id="KW-0813">Transport</keyword>
<proteinExistence type="inferred from homology"/>
<dbReference type="EMBL" id="BX571857">
    <property type="protein sequence ID" value="CAG43868.1"/>
    <property type="molecule type" value="Genomic_DNA"/>
</dbReference>
<dbReference type="RefSeq" id="WP_001292149.1">
    <property type="nucleotide sequence ID" value="NC_002953.3"/>
</dbReference>
<dbReference type="SMR" id="Q6G7F4"/>
<dbReference type="KEGG" id="sas:SAS2059"/>
<dbReference type="HOGENOM" id="CLU_072531_3_0_9"/>
<dbReference type="GO" id="GO:0005737">
    <property type="term" value="C:cytoplasm"/>
    <property type="evidence" value="ECO:0007669"/>
    <property type="project" value="UniProtKB-SubCell"/>
</dbReference>
<dbReference type="GO" id="GO:0005886">
    <property type="term" value="C:plasma membrane"/>
    <property type="evidence" value="ECO:0007669"/>
    <property type="project" value="TreeGrafter"/>
</dbReference>
<dbReference type="GO" id="GO:0016301">
    <property type="term" value="F:kinase activity"/>
    <property type="evidence" value="ECO:0007669"/>
    <property type="project" value="UniProtKB-KW"/>
</dbReference>
<dbReference type="GO" id="GO:0090563">
    <property type="term" value="F:protein-phosphocysteine-sugar phosphotransferase activity"/>
    <property type="evidence" value="ECO:0007669"/>
    <property type="project" value="TreeGrafter"/>
</dbReference>
<dbReference type="GO" id="GO:0009401">
    <property type="term" value="P:phosphoenolpyruvate-dependent sugar phosphotransferase system"/>
    <property type="evidence" value="ECO:0007669"/>
    <property type="project" value="UniProtKB-KW"/>
</dbReference>
<dbReference type="CDD" id="cd00211">
    <property type="entry name" value="PTS_IIA_fru"/>
    <property type="match status" value="1"/>
</dbReference>
<dbReference type="Gene3D" id="3.40.930.10">
    <property type="entry name" value="Mannitol-specific EII, Chain A"/>
    <property type="match status" value="1"/>
</dbReference>
<dbReference type="InterPro" id="IPR016152">
    <property type="entry name" value="PTrfase/Anion_transptr"/>
</dbReference>
<dbReference type="InterPro" id="IPR002178">
    <property type="entry name" value="PTS_EIIA_type-2_dom"/>
</dbReference>
<dbReference type="InterPro" id="IPR050893">
    <property type="entry name" value="Sugar_PTS"/>
</dbReference>
<dbReference type="PANTHER" id="PTHR30181">
    <property type="entry name" value="MANNITOL PERMEASE IIC COMPONENT"/>
    <property type="match status" value="1"/>
</dbReference>
<dbReference type="PANTHER" id="PTHR30181:SF2">
    <property type="entry name" value="PTS SYSTEM MANNITOL-SPECIFIC EIICBA COMPONENT"/>
    <property type="match status" value="1"/>
</dbReference>
<dbReference type="Pfam" id="PF00359">
    <property type="entry name" value="PTS_EIIA_2"/>
    <property type="match status" value="1"/>
</dbReference>
<dbReference type="SUPFAM" id="SSF55804">
    <property type="entry name" value="Phoshotransferase/anion transport protein"/>
    <property type="match status" value="1"/>
</dbReference>
<dbReference type="PROSITE" id="PS51094">
    <property type="entry name" value="PTS_EIIA_TYPE_2"/>
    <property type="match status" value="1"/>
</dbReference>
<dbReference type="PROSITE" id="PS00372">
    <property type="entry name" value="PTS_EIIA_TYPE_2_HIS"/>
    <property type="match status" value="1"/>
</dbReference>
<protein>
    <recommendedName>
        <fullName evidence="3">Mannitol-specific phosphotransferase enzyme IIA component</fullName>
    </recommendedName>
    <alternativeName>
        <fullName evidence="3">EIIA</fullName>
    </alternativeName>
    <alternativeName>
        <fullName evidence="3">EIII</fullName>
    </alternativeName>
    <alternativeName>
        <fullName evidence="3">PTS system mannitol-specific EIIA component</fullName>
    </alternativeName>
</protein>
<reference key="1">
    <citation type="journal article" date="2004" name="Proc. Natl. Acad. Sci. U.S.A.">
        <title>Complete genomes of two clinical Staphylococcus aureus strains: evidence for the rapid evolution of virulence and drug resistance.</title>
        <authorList>
            <person name="Holden M.T.G."/>
            <person name="Feil E.J."/>
            <person name="Lindsay J.A."/>
            <person name="Peacock S.J."/>
            <person name="Day N.P.J."/>
            <person name="Enright M.C."/>
            <person name="Foster T.J."/>
            <person name="Moore C.E."/>
            <person name="Hurst L."/>
            <person name="Atkin R."/>
            <person name="Barron A."/>
            <person name="Bason N."/>
            <person name="Bentley S.D."/>
            <person name="Chillingworth C."/>
            <person name="Chillingworth T."/>
            <person name="Churcher C."/>
            <person name="Clark L."/>
            <person name="Corton C."/>
            <person name="Cronin A."/>
            <person name="Doggett J."/>
            <person name="Dowd L."/>
            <person name="Feltwell T."/>
            <person name="Hance Z."/>
            <person name="Harris B."/>
            <person name="Hauser H."/>
            <person name="Holroyd S."/>
            <person name="Jagels K."/>
            <person name="James K.D."/>
            <person name="Lennard N."/>
            <person name="Line A."/>
            <person name="Mayes R."/>
            <person name="Moule S."/>
            <person name="Mungall K."/>
            <person name="Ormond D."/>
            <person name="Quail M.A."/>
            <person name="Rabbinowitsch E."/>
            <person name="Rutherford K.M."/>
            <person name="Sanders M."/>
            <person name="Sharp S."/>
            <person name="Simmonds M."/>
            <person name="Stevens K."/>
            <person name="Whitehead S."/>
            <person name="Barrell B.G."/>
            <person name="Spratt B.G."/>
            <person name="Parkhill J."/>
        </authorList>
    </citation>
    <scope>NUCLEOTIDE SEQUENCE [LARGE SCALE GENOMIC DNA]</scope>
    <source>
        <strain>MSSA476</strain>
    </source>
</reference>
<accession>Q6G7F4</accession>
<name>PTMA_STAAS</name>
<feature type="initiator methionine" description="Removed" evidence="1">
    <location>
        <position position="1"/>
    </location>
</feature>
<feature type="chain" id="PRO_0000186640" description="Mannitol-specific phosphotransferase enzyme IIA component">
    <location>
        <begin position="2"/>
        <end position="144"/>
    </location>
</feature>
<feature type="domain" description="PTS EIIA type-2" evidence="4">
    <location>
        <begin position="3"/>
        <end position="142"/>
    </location>
</feature>
<feature type="active site" description="Tele-phosphohistidine intermediate; for EIIA activity" evidence="3 4">
    <location>
        <position position="63"/>
    </location>
</feature>
<feature type="modified residue" description="Phosphohistidine; by HPr" evidence="2 3">
    <location>
        <position position="63"/>
    </location>
</feature>
<evidence type="ECO:0000250" key="1"/>
<evidence type="ECO:0000250" key="2">
    <source>
        <dbReference type="UniProtKB" id="P00550"/>
    </source>
</evidence>
<evidence type="ECO:0000250" key="3">
    <source>
        <dbReference type="UniProtKB" id="P0A0E0"/>
    </source>
</evidence>
<evidence type="ECO:0000255" key="4">
    <source>
        <dbReference type="PROSITE-ProRule" id="PRU00417"/>
    </source>
</evidence>
<evidence type="ECO:0000305" key="5"/>
<gene>
    <name type="primary">mtlF</name>
    <name type="synonym">mtlA</name>
    <name type="ordered locus">SAS2059</name>
</gene>
<sequence length="144" mass="15542">MSELFSNDNIFLNVNVNSQNEAIEKAGKALVDSGAVTDAYIQAMKDREQVVSTFMGNGLAIPHGTDEAKTNVIHSGLTLLQIPEGVDWDGEVVKVVVGIAGKDGEHLDLLSKIAITFSEEENVDRIVQAKSAEEIKQVFEEADA</sequence>
<comment type="function">
    <text evidence="3">The phosphoenolpyruvate-dependent sugar phosphotransferase system (sugar PTS), a major carbohydrate active transport system, catalyzes the phosphorylation of incoming sugar substrates concomitantly with their translocation across the cell membrane. The enzyme II CmtAB PTS system is involved in D-mannitol transport.</text>
</comment>
<comment type="subunit">
    <text evidence="3">Homodimer or homotrimer. Seems to be a monomer when not phosphorylated.</text>
</comment>
<comment type="subcellular location">
    <subcellularLocation>
        <location evidence="5">Cytoplasm</location>
    </subcellularLocation>
</comment>
<comment type="domain">
    <text evidence="4">The PTS EIIA type-2 domain is phosphorylated by phospho-HPr on a histidyl residue. Then, it transfers the phosphoryl group to the PTS EIIB type-2 domain.</text>
</comment>
<organism>
    <name type="scientific">Staphylococcus aureus (strain MSSA476)</name>
    <dbReference type="NCBI Taxonomy" id="282459"/>
    <lineage>
        <taxon>Bacteria</taxon>
        <taxon>Bacillati</taxon>
        <taxon>Bacillota</taxon>
        <taxon>Bacilli</taxon>
        <taxon>Bacillales</taxon>
        <taxon>Staphylococcaceae</taxon>
        <taxon>Staphylococcus</taxon>
    </lineage>
</organism>